<comment type="function">
    <text evidence="1">Hydrolyzes ureidoacrylate to form aminoacrylate and carbamate. The carbamate hydrolyzes spontaneously, thereby releasing one of the nitrogen atoms of the pyrimidine ring as ammonia and one of its carbon atoms as CO2.</text>
</comment>
<comment type="catalytic activity">
    <reaction evidence="1">
        <text>(Z)-3-ureidoacrylate + H2O + H(+) = (Z)-3-aminoacrylate + NH4(+) + CO2</text>
        <dbReference type="Rhea" id="RHEA:42624"/>
        <dbReference type="ChEBI" id="CHEBI:15377"/>
        <dbReference type="ChEBI" id="CHEBI:15378"/>
        <dbReference type="ChEBI" id="CHEBI:16526"/>
        <dbReference type="ChEBI" id="CHEBI:28938"/>
        <dbReference type="ChEBI" id="CHEBI:59891"/>
        <dbReference type="ChEBI" id="CHEBI:59894"/>
        <dbReference type="EC" id="3.5.1.110"/>
    </reaction>
</comment>
<comment type="catalytic activity">
    <reaction evidence="1">
        <text>(Z)-3-ureidoacrylate + H2O = (Z)-3-aminoacrylate + carbamate + H(+)</text>
        <dbReference type="Rhea" id="RHEA:31603"/>
        <dbReference type="ChEBI" id="CHEBI:13941"/>
        <dbReference type="ChEBI" id="CHEBI:15377"/>
        <dbReference type="ChEBI" id="CHEBI:15378"/>
        <dbReference type="ChEBI" id="CHEBI:59891"/>
        <dbReference type="ChEBI" id="CHEBI:59894"/>
    </reaction>
</comment>
<comment type="catalytic activity">
    <reaction evidence="1">
        <text>(Z)-2-methylureidoacrylate + H2O + H(+) = (Z)-2-methylaminoacrylate + NH4(+) + CO2</text>
        <dbReference type="Rhea" id="RHEA:42620"/>
        <dbReference type="ChEBI" id="CHEBI:15377"/>
        <dbReference type="ChEBI" id="CHEBI:15378"/>
        <dbReference type="ChEBI" id="CHEBI:16526"/>
        <dbReference type="ChEBI" id="CHEBI:28938"/>
        <dbReference type="ChEBI" id="CHEBI:143783"/>
        <dbReference type="ChEBI" id="CHEBI:145735"/>
        <dbReference type="EC" id="3.5.1.110"/>
    </reaction>
</comment>
<comment type="induction">
    <text evidence="1">Up-regulated by the nitrogen regulatory protein C (NtrC also called GlnG) and repressed by RutR.</text>
</comment>
<comment type="similarity">
    <text evidence="1">Belongs to the isochorismatase family. RutB subfamily.</text>
</comment>
<accession>B5YU52</accession>
<organism>
    <name type="scientific">Escherichia coli O157:H7 (strain EC4115 / EHEC)</name>
    <dbReference type="NCBI Taxonomy" id="444450"/>
    <lineage>
        <taxon>Bacteria</taxon>
        <taxon>Pseudomonadati</taxon>
        <taxon>Pseudomonadota</taxon>
        <taxon>Gammaproteobacteria</taxon>
        <taxon>Enterobacterales</taxon>
        <taxon>Enterobacteriaceae</taxon>
        <taxon>Escherichia</taxon>
    </lineage>
</organism>
<proteinExistence type="inferred from homology"/>
<dbReference type="EC" id="3.5.1.110" evidence="1"/>
<dbReference type="EMBL" id="CP001164">
    <property type="protein sequence ID" value="ACI39728.1"/>
    <property type="molecule type" value="Genomic_DNA"/>
</dbReference>
<dbReference type="SMR" id="B5YU52"/>
<dbReference type="KEGG" id="ecf:ECH74115_1248"/>
<dbReference type="HOGENOM" id="CLU_068979_8_0_6"/>
<dbReference type="GO" id="GO:0016811">
    <property type="term" value="F:hydrolase activity, acting on carbon-nitrogen (but not peptide) bonds, in linear amides"/>
    <property type="evidence" value="ECO:0007669"/>
    <property type="project" value="UniProtKB-UniRule"/>
</dbReference>
<dbReference type="GO" id="GO:0019740">
    <property type="term" value="P:nitrogen utilization"/>
    <property type="evidence" value="ECO:0007669"/>
    <property type="project" value="UniProtKB-UniRule"/>
</dbReference>
<dbReference type="GO" id="GO:0006212">
    <property type="term" value="P:uracil catabolic process"/>
    <property type="evidence" value="ECO:0007669"/>
    <property type="project" value="UniProtKB-UniRule"/>
</dbReference>
<dbReference type="CDD" id="cd00431">
    <property type="entry name" value="cysteine_hydrolases"/>
    <property type="match status" value="1"/>
</dbReference>
<dbReference type="FunFam" id="3.40.50.850:FF:000004">
    <property type="entry name" value="Peroxyureidoacrylate/ureidoacrylate amidohydrolase RutB"/>
    <property type="match status" value="1"/>
</dbReference>
<dbReference type="Gene3D" id="3.40.50.850">
    <property type="entry name" value="Isochorismatase-like"/>
    <property type="match status" value="1"/>
</dbReference>
<dbReference type="HAMAP" id="MF_00830">
    <property type="entry name" value="RutB"/>
    <property type="match status" value="1"/>
</dbReference>
<dbReference type="InterPro" id="IPR000868">
    <property type="entry name" value="Isochorismatase-like_dom"/>
</dbReference>
<dbReference type="InterPro" id="IPR050272">
    <property type="entry name" value="Isochorismatase-like_hydrls"/>
</dbReference>
<dbReference type="InterPro" id="IPR036380">
    <property type="entry name" value="Isochorismatase-like_sf"/>
</dbReference>
<dbReference type="InterPro" id="IPR019916">
    <property type="entry name" value="RutB"/>
</dbReference>
<dbReference type="NCBIfam" id="TIGR03614">
    <property type="entry name" value="RutB"/>
    <property type="match status" value="1"/>
</dbReference>
<dbReference type="PANTHER" id="PTHR43540:SF6">
    <property type="entry name" value="ISOCHORISMATASE-LIKE DOMAIN-CONTAINING PROTEIN"/>
    <property type="match status" value="1"/>
</dbReference>
<dbReference type="PANTHER" id="PTHR43540">
    <property type="entry name" value="PEROXYUREIDOACRYLATE/UREIDOACRYLATE AMIDOHYDROLASE-RELATED"/>
    <property type="match status" value="1"/>
</dbReference>
<dbReference type="Pfam" id="PF00857">
    <property type="entry name" value="Isochorismatase"/>
    <property type="match status" value="1"/>
</dbReference>
<dbReference type="SUPFAM" id="SSF52499">
    <property type="entry name" value="Isochorismatase-like hydrolases"/>
    <property type="match status" value="1"/>
</dbReference>
<evidence type="ECO:0000255" key="1">
    <source>
        <dbReference type="HAMAP-Rule" id="MF_00830"/>
    </source>
</evidence>
<reference key="1">
    <citation type="journal article" date="2011" name="Proc. Natl. Acad. Sci. U.S.A.">
        <title>Genomic anatomy of Escherichia coli O157:H7 outbreaks.</title>
        <authorList>
            <person name="Eppinger M."/>
            <person name="Mammel M.K."/>
            <person name="Leclerc J.E."/>
            <person name="Ravel J."/>
            <person name="Cebula T.A."/>
        </authorList>
    </citation>
    <scope>NUCLEOTIDE SEQUENCE [LARGE SCALE GENOMIC DNA]</scope>
    <source>
        <strain>EC4115 / EHEC</strain>
    </source>
</reference>
<gene>
    <name evidence="1" type="primary">rutB</name>
    <name type="ordered locus">ECH74115_1248</name>
</gene>
<protein>
    <recommendedName>
        <fullName evidence="1">Ureidoacrylate amidohydrolase RutB</fullName>
        <ecNumber evidence="1">3.5.1.110</ecNumber>
    </recommendedName>
</protein>
<name>RUTB_ECO5E</name>
<keyword id="KW-0378">Hydrolase</keyword>
<sequence length="231" mass="25418">MMTTLTARPEAITFDPQQSALIVVDMQNAYATPGGYLDLAGFDVSTTRPVIANIQTAVTAARAAGMLIIWFQNGWDEQYVEAGGPGSPNFHKSNALKTMRKQPQLQGKLLAKGSWDYQLVDELVPQPGDIVLPKPRYSGFFNTPLDSILRSRGIRHLVFTSIATNVCVESTLRDGFFLEYFGVVLEDATHQAGPEFVQKAALFNIETFFGWVSDVETFCDALSPTSFARIA</sequence>
<feature type="chain" id="PRO_0000402672" description="Ureidoacrylate amidohydrolase RutB">
    <location>
        <begin position="1"/>
        <end position="231"/>
    </location>
</feature>
<feature type="active site" description="Proton acceptor" evidence="1">
    <location>
        <position position="25"/>
    </location>
</feature>
<feature type="active site" evidence="1">
    <location>
        <position position="134"/>
    </location>
</feature>
<feature type="active site" description="Nucleophile" evidence="1">
    <location>
        <position position="167"/>
    </location>
</feature>